<reference key="1">
    <citation type="journal article" date="2003" name="Nat. Genet.">
        <title>Comparative analysis of the genome sequences of Bordetella pertussis, Bordetella parapertussis and Bordetella bronchiseptica.</title>
        <authorList>
            <person name="Parkhill J."/>
            <person name="Sebaihia M."/>
            <person name="Preston A."/>
            <person name="Murphy L.D."/>
            <person name="Thomson N.R."/>
            <person name="Harris D.E."/>
            <person name="Holden M.T.G."/>
            <person name="Churcher C.M."/>
            <person name="Bentley S.D."/>
            <person name="Mungall K.L."/>
            <person name="Cerdeno-Tarraga A.-M."/>
            <person name="Temple L."/>
            <person name="James K.D."/>
            <person name="Harris B."/>
            <person name="Quail M.A."/>
            <person name="Achtman M."/>
            <person name="Atkin R."/>
            <person name="Baker S."/>
            <person name="Basham D."/>
            <person name="Bason N."/>
            <person name="Cherevach I."/>
            <person name="Chillingworth T."/>
            <person name="Collins M."/>
            <person name="Cronin A."/>
            <person name="Davis P."/>
            <person name="Doggett J."/>
            <person name="Feltwell T."/>
            <person name="Goble A."/>
            <person name="Hamlin N."/>
            <person name="Hauser H."/>
            <person name="Holroyd S."/>
            <person name="Jagels K."/>
            <person name="Leather S."/>
            <person name="Moule S."/>
            <person name="Norberczak H."/>
            <person name="O'Neil S."/>
            <person name="Ormond D."/>
            <person name="Price C."/>
            <person name="Rabbinowitsch E."/>
            <person name="Rutter S."/>
            <person name="Sanders M."/>
            <person name="Saunders D."/>
            <person name="Seeger K."/>
            <person name="Sharp S."/>
            <person name="Simmonds M."/>
            <person name="Skelton J."/>
            <person name="Squares R."/>
            <person name="Squares S."/>
            <person name="Stevens K."/>
            <person name="Unwin L."/>
            <person name="Whitehead S."/>
            <person name="Barrell B.G."/>
            <person name="Maskell D.J."/>
        </authorList>
    </citation>
    <scope>NUCLEOTIDE SEQUENCE [LARGE SCALE GENOMIC DNA]</scope>
    <source>
        <strain>12822 / ATCC BAA-587 / NCTC 13253</strain>
    </source>
</reference>
<feature type="chain" id="PRO_0000148089" description="ATP-dependent protease subunit HslV">
    <location>
        <begin position="1"/>
        <end position="179"/>
    </location>
</feature>
<feature type="active site" evidence="1">
    <location>
        <position position="7"/>
    </location>
</feature>
<feature type="binding site" evidence="1">
    <location>
        <position position="162"/>
    </location>
    <ligand>
        <name>Na(+)</name>
        <dbReference type="ChEBI" id="CHEBI:29101"/>
    </ligand>
</feature>
<feature type="binding site" evidence="1">
    <location>
        <position position="165"/>
    </location>
    <ligand>
        <name>Na(+)</name>
        <dbReference type="ChEBI" id="CHEBI:29101"/>
    </ligand>
</feature>
<feature type="binding site" evidence="1">
    <location>
        <position position="168"/>
    </location>
    <ligand>
        <name>Na(+)</name>
        <dbReference type="ChEBI" id="CHEBI:29101"/>
    </ligand>
</feature>
<sequence length="179" mass="19442">MEQFHATTIVCVRRGNHVALGGDGQVTLGNIVIKGTARKIRRLYHDKVLAGFAGATADAFTLQERFEAKLEKHQGHLMRAAVELTRDWRTDRVLRRLEAMLIVADTEHTLVLTGNGDVLEPEHGLAAIGSGGAYAQSAALALLRNTELPPEAIVKQSLEIAGDLCIYTNQNHVIETLGA</sequence>
<proteinExistence type="inferred from homology"/>
<gene>
    <name evidence="1" type="primary">hslV</name>
    <name type="ordered locus">BPP0177</name>
</gene>
<organism>
    <name type="scientific">Bordetella parapertussis (strain 12822 / ATCC BAA-587 / NCTC 13253)</name>
    <dbReference type="NCBI Taxonomy" id="257311"/>
    <lineage>
        <taxon>Bacteria</taxon>
        <taxon>Pseudomonadati</taxon>
        <taxon>Pseudomonadota</taxon>
        <taxon>Betaproteobacteria</taxon>
        <taxon>Burkholderiales</taxon>
        <taxon>Alcaligenaceae</taxon>
        <taxon>Bordetella</taxon>
    </lineage>
</organism>
<name>HSLV_BORPA</name>
<accession>Q7W215</accession>
<protein>
    <recommendedName>
        <fullName evidence="1">ATP-dependent protease subunit HslV</fullName>
        <ecNumber evidence="1">3.4.25.2</ecNumber>
    </recommendedName>
</protein>
<dbReference type="EC" id="3.4.25.2" evidence="1"/>
<dbReference type="EMBL" id="BX640423">
    <property type="protein sequence ID" value="CAE39918.1"/>
    <property type="molecule type" value="Genomic_DNA"/>
</dbReference>
<dbReference type="RefSeq" id="WP_003807163.1">
    <property type="nucleotide sequence ID" value="NC_002928.3"/>
</dbReference>
<dbReference type="SMR" id="Q7W215"/>
<dbReference type="MEROPS" id="T01.006"/>
<dbReference type="GeneID" id="93206407"/>
<dbReference type="KEGG" id="bpa:BPP0177"/>
<dbReference type="HOGENOM" id="CLU_093872_1_0_4"/>
<dbReference type="Proteomes" id="UP000001421">
    <property type="component" value="Chromosome"/>
</dbReference>
<dbReference type="GO" id="GO:0009376">
    <property type="term" value="C:HslUV protease complex"/>
    <property type="evidence" value="ECO:0007669"/>
    <property type="project" value="UniProtKB-UniRule"/>
</dbReference>
<dbReference type="GO" id="GO:0005839">
    <property type="term" value="C:proteasome core complex"/>
    <property type="evidence" value="ECO:0007669"/>
    <property type="project" value="InterPro"/>
</dbReference>
<dbReference type="GO" id="GO:0046872">
    <property type="term" value="F:metal ion binding"/>
    <property type="evidence" value="ECO:0007669"/>
    <property type="project" value="UniProtKB-KW"/>
</dbReference>
<dbReference type="GO" id="GO:0004298">
    <property type="term" value="F:threonine-type endopeptidase activity"/>
    <property type="evidence" value="ECO:0007669"/>
    <property type="project" value="UniProtKB-KW"/>
</dbReference>
<dbReference type="GO" id="GO:0051603">
    <property type="term" value="P:proteolysis involved in protein catabolic process"/>
    <property type="evidence" value="ECO:0007669"/>
    <property type="project" value="InterPro"/>
</dbReference>
<dbReference type="CDD" id="cd01913">
    <property type="entry name" value="protease_HslV"/>
    <property type="match status" value="1"/>
</dbReference>
<dbReference type="FunFam" id="3.60.20.10:FF:000002">
    <property type="entry name" value="ATP-dependent protease subunit HslV"/>
    <property type="match status" value="1"/>
</dbReference>
<dbReference type="Gene3D" id="3.60.20.10">
    <property type="entry name" value="Glutamine Phosphoribosylpyrophosphate, subunit 1, domain 1"/>
    <property type="match status" value="1"/>
</dbReference>
<dbReference type="HAMAP" id="MF_00248">
    <property type="entry name" value="HslV"/>
    <property type="match status" value="1"/>
</dbReference>
<dbReference type="InterPro" id="IPR022281">
    <property type="entry name" value="ATP-dep_Prtase_HsIV_su"/>
</dbReference>
<dbReference type="InterPro" id="IPR029055">
    <property type="entry name" value="Ntn_hydrolases_N"/>
</dbReference>
<dbReference type="InterPro" id="IPR001353">
    <property type="entry name" value="Proteasome_sua/b"/>
</dbReference>
<dbReference type="InterPro" id="IPR023333">
    <property type="entry name" value="Proteasome_suB-type"/>
</dbReference>
<dbReference type="NCBIfam" id="TIGR03692">
    <property type="entry name" value="ATP_dep_HslV"/>
    <property type="match status" value="1"/>
</dbReference>
<dbReference type="NCBIfam" id="NF003964">
    <property type="entry name" value="PRK05456.1"/>
    <property type="match status" value="1"/>
</dbReference>
<dbReference type="PANTHER" id="PTHR32194:SF0">
    <property type="entry name" value="ATP-DEPENDENT PROTEASE SUBUNIT HSLV"/>
    <property type="match status" value="1"/>
</dbReference>
<dbReference type="PANTHER" id="PTHR32194">
    <property type="entry name" value="METALLOPROTEASE TLDD"/>
    <property type="match status" value="1"/>
</dbReference>
<dbReference type="Pfam" id="PF00227">
    <property type="entry name" value="Proteasome"/>
    <property type="match status" value="1"/>
</dbReference>
<dbReference type="PIRSF" id="PIRSF039093">
    <property type="entry name" value="HslV"/>
    <property type="match status" value="1"/>
</dbReference>
<dbReference type="SUPFAM" id="SSF56235">
    <property type="entry name" value="N-terminal nucleophile aminohydrolases (Ntn hydrolases)"/>
    <property type="match status" value="1"/>
</dbReference>
<dbReference type="PROSITE" id="PS51476">
    <property type="entry name" value="PROTEASOME_BETA_2"/>
    <property type="match status" value="1"/>
</dbReference>
<evidence type="ECO:0000255" key="1">
    <source>
        <dbReference type="HAMAP-Rule" id="MF_00248"/>
    </source>
</evidence>
<keyword id="KW-0021">Allosteric enzyme</keyword>
<keyword id="KW-0963">Cytoplasm</keyword>
<keyword id="KW-0378">Hydrolase</keyword>
<keyword id="KW-0479">Metal-binding</keyword>
<keyword id="KW-0645">Protease</keyword>
<keyword id="KW-0915">Sodium</keyword>
<keyword id="KW-0888">Threonine protease</keyword>
<comment type="function">
    <text evidence="1">Protease subunit of a proteasome-like degradation complex believed to be a general protein degrading machinery.</text>
</comment>
<comment type="catalytic activity">
    <reaction evidence="1">
        <text>ATP-dependent cleavage of peptide bonds with broad specificity.</text>
        <dbReference type="EC" id="3.4.25.2"/>
    </reaction>
</comment>
<comment type="activity regulation">
    <text evidence="1">Allosterically activated by HslU binding.</text>
</comment>
<comment type="subunit">
    <text evidence="1">A double ring-shaped homohexamer of HslV is capped on each side by a ring-shaped HslU homohexamer. The assembly of the HslU/HslV complex is dependent on binding of ATP.</text>
</comment>
<comment type="subcellular location">
    <subcellularLocation>
        <location evidence="1">Cytoplasm</location>
    </subcellularLocation>
</comment>
<comment type="similarity">
    <text evidence="1">Belongs to the peptidase T1B family. HslV subfamily.</text>
</comment>